<evidence type="ECO:0000255" key="1">
    <source>
        <dbReference type="HAMAP-Rule" id="MF_00037"/>
    </source>
</evidence>
<keyword id="KW-0131">Cell cycle</keyword>
<keyword id="KW-0132">Cell division</keyword>
<keyword id="KW-0133">Cell shape</keyword>
<keyword id="KW-0961">Cell wall biogenesis/degradation</keyword>
<keyword id="KW-0963">Cytoplasm</keyword>
<keyword id="KW-0274">FAD</keyword>
<keyword id="KW-0285">Flavoprotein</keyword>
<keyword id="KW-0521">NADP</keyword>
<keyword id="KW-0560">Oxidoreductase</keyword>
<keyword id="KW-0573">Peptidoglycan synthesis</keyword>
<gene>
    <name evidence="1" type="primary">murB</name>
    <name type="ordered locus">mll1552</name>
</gene>
<organism>
    <name type="scientific">Mesorhizobium japonicum (strain LMG 29417 / CECT 9101 / MAFF 303099)</name>
    <name type="common">Mesorhizobium loti (strain MAFF 303099)</name>
    <dbReference type="NCBI Taxonomy" id="266835"/>
    <lineage>
        <taxon>Bacteria</taxon>
        <taxon>Pseudomonadati</taxon>
        <taxon>Pseudomonadota</taxon>
        <taxon>Alphaproteobacteria</taxon>
        <taxon>Hyphomicrobiales</taxon>
        <taxon>Phyllobacteriaceae</taxon>
        <taxon>Mesorhizobium</taxon>
    </lineage>
</organism>
<dbReference type="EC" id="1.3.1.98" evidence="1"/>
<dbReference type="EMBL" id="BA000012">
    <property type="protein sequence ID" value="BAB48899.1"/>
    <property type="molecule type" value="Genomic_DNA"/>
</dbReference>
<dbReference type="SMR" id="Q98KB5"/>
<dbReference type="KEGG" id="mlo:mll1552"/>
<dbReference type="eggNOG" id="COG0812">
    <property type="taxonomic scope" value="Bacteria"/>
</dbReference>
<dbReference type="HOGENOM" id="CLU_035304_1_0_5"/>
<dbReference type="UniPathway" id="UPA00219"/>
<dbReference type="Proteomes" id="UP000000552">
    <property type="component" value="Chromosome"/>
</dbReference>
<dbReference type="GO" id="GO:0005829">
    <property type="term" value="C:cytosol"/>
    <property type="evidence" value="ECO:0007669"/>
    <property type="project" value="TreeGrafter"/>
</dbReference>
<dbReference type="GO" id="GO:0071949">
    <property type="term" value="F:FAD binding"/>
    <property type="evidence" value="ECO:0007669"/>
    <property type="project" value="InterPro"/>
</dbReference>
<dbReference type="GO" id="GO:0008762">
    <property type="term" value="F:UDP-N-acetylmuramate dehydrogenase activity"/>
    <property type="evidence" value="ECO:0007669"/>
    <property type="project" value="UniProtKB-UniRule"/>
</dbReference>
<dbReference type="GO" id="GO:0051301">
    <property type="term" value="P:cell division"/>
    <property type="evidence" value="ECO:0007669"/>
    <property type="project" value="UniProtKB-KW"/>
</dbReference>
<dbReference type="GO" id="GO:0071555">
    <property type="term" value="P:cell wall organization"/>
    <property type="evidence" value="ECO:0007669"/>
    <property type="project" value="UniProtKB-KW"/>
</dbReference>
<dbReference type="GO" id="GO:0009252">
    <property type="term" value="P:peptidoglycan biosynthetic process"/>
    <property type="evidence" value="ECO:0007669"/>
    <property type="project" value="UniProtKB-UniRule"/>
</dbReference>
<dbReference type="GO" id="GO:0008360">
    <property type="term" value="P:regulation of cell shape"/>
    <property type="evidence" value="ECO:0007669"/>
    <property type="project" value="UniProtKB-KW"/>
</dbReference>
<dbReference type="Gene3D" id="3.30.465.10">
    <property type="match status" value="1"/>
</dbReference>
<dbReference type="Gene3D" id="3.90.78.10">
    <property type="entry name" value="UDP-N-acetylenolpyruvoylglucosamine reductase, C-terminal domain"/>
    <property type="match status" value="1"/>
</dbReference>
<dbReference type="Gene3D" id="3.30.43.10">
    <property type="entry name" value="Uridine Diphospho-n-acetylenolpyruvylglucosamine Reductase, domain 2"/>
    <property type="match status" value="1"/>
</dbReference>
<dbReference type="HAMAP" id="MF_00037">
    <property type="entry name" value="MurB"/>
    <property type="match status" value="1"/>
</dbReference>
<dbReference type="InterPro" id="IPR016166">
    <property type="entry name" value="FAD-bd_PCMH"/>
</dbReference>
<dbReference type="InterPro" id="IPR036318">
    <property type="entry name" value="FAD-bd_PCMH-like_sf"/>
</dbReference>
<dbReference type="InterPro" id="IPR016167">
    <property type="entry name" value="FAD-bd_PCMH_sub1"/>
</dbReference>
<dbReference type="InterPro" id="IPR016169">
    <property type="entry name" value="FAD-bd_PCMH_sub2"/>
</dbReference>
<dbReference type="InterPro" id="IPR003170">
    <property type="entry name" value="MurB"/>
</dbReference>
<dbReference type="InterPro" id="IPR011601">
    <property type="entry name" value="MurB_C"/>
</dbReference>
<dbReference type="InterPro" id="IPR036635">
    <property type="entry name" value="MurB_C_sf"/>
</dbReference>
<dbReference type="InterPro" id="IPR006094">
    <property type="entry name" value="Oxid_FAD_bind_N"/>
</dbReference>
<dbReference type="NCBIfam" id="TIGR00179">
    <property type="entry name" value="murB"/>
    <property type="match status" value="1"/>
</dbReference>
<dbReference type="NCBIfam" id="NF010480">
    <property type="entry name" value="PRK13905.1"/>
    <property type="match status" value="1"/>
</dbReference>
<dbReference type="PANTHER" id="PTHR21071">
    <property type="entry name" value="UDP-N-ACETYLENOLPYRUVOYLGLUCOSAMINE REDUCTASE"/>
    <property type="match status" value="1"/>
</dbReference>
<dbReference type="PANTHER" id="PTHR21071:SF4">
    <property type="entry name" value="UDP-N-ACETYLENOLPYRUVOYLGLUCOSAMINE REDUCTASE"/>
    <property type="match status" value="1"/>
</dbReference>
<dbReference type="Pfam" id="PF01565">
    <property type="entry name" value="FAD_binding_4"/>
    <property type="match status" value="1"/>
</dbReference>
<dbReference type="Pfam" id="PF02873">
    <property type="entry name" value="MurB_C"/>
    <property type="match status" value="1"/>
</dbReference>
<dbReference type="SUPFAM" id="SSF56176">
    <property type="entry name" value="FAD-binding/transporter-associated domain-like"/>
    <property type="match status" value="1"/>
</dbReference>
<dbReference type="SUPFAM" id="SSF56194">
    <property type="entry name" value="Uridine diphospho-N-Acetylenolpyruvylglucosamine reductase, MurB, C-terminal domain"/>
    <property type="match status" value="1"/>
</dbReference>
<dbReference type="PROSITE" id="PS51387">
    <property type="entry name" value="FAD_PCMH"/>
    <property type="match status" value="1"/>
</dbReference>
<comment type="function">
    <text evidence="1">Cell wall formation.</text>
</comment>
<comment type="catalytic activity">
    <reaction evidence="1">
        <text>UDP-N-acetyl-alpha-D-muramate + NADP(+) = UDP-N-acetyl-3-O-(1-carboxyvinyl)-alpha-D-glucosamine + NADPH + H(+)</text>
        <dbReference type="Rhea" id="RHEA:12248"/>
        <dbReference type="ChEBI" id="CHEBI:15378"/>
        <dbReference type="ChEBI" id="CHEBI:57783"/>
        <dbReference type="ChEBI" id="CHEBI:58349"/>
        <dbReference type="ChEBI" id="CHEBI:68483"/>
        <dbReference type="ChEBI" id="CHEBI:70757"/>
        <dbReference type="EC" id="1.3.1.98"/>
    </reaction>
</comment>
<comment type="cofactor">
    <cofactor evidence="1">
        <name>FAD</name>
        <dbReference type="ChEBI" id="CHEBI:57692"/>
    </cofactor>
</comment>
<comment type="pathway">
    <text evidence="1">Cell wall biogenesis; peptidoglycan biosynthesis.</text>
</comment>
<comment type="subcellular location">
    <subcellularLocation>
        <location evidence="1">Cytoplasm</location>
    </subcellularLocation>
</comment>
<comment type="similarity">
    <text evidence="1">Belongs to the MurB family.</text>
</comment>
<reference key="1">
    <citation type="journal article" date="2000" name="DNA Res.">
        <title>Complete genome structure of the nitrogen-fixing symbiotic bacterium Mesorhizobium loti.</title>
        <authorList>
            <person name="Kaneko T."/>
            <person name="Nakamura Y."/>
            <person name="Sato S."/>
            <person name="Asamizu E."/>
            <person name="Kato T."/>
            <person name="Sasamoto S."/>
            <person name="Watanabe A."/>
            <person name="Idesawa K."/>
            <person name="Ishikawa A."/>
            <person name="Kawashima K."/>
            <person name="Kimura T."/>
            <person name="Kishida Y."/>
            <person name="Kiyokawa C."/>
            <person name="Kohara M."/>
            <person name="Matsumoto M."/>
            <person name="Matsuno A."/>
            <person name="Mochizuki Y."/>
            <person name="Nakayama S."/>
            <person name="Nakazaki N."/>
            <person name="Shimpo S."/>
            <person name="Sugimoto M."/>
            <person name="Takeuchi C."/>
            <person name="Yamada M."/>
            <person name="Tabata S."/>
        </authorList>
    </citation>
    <scope>NUCLEOTIDE SEQUENCE [LARGE SCALE GENOMIC DNA]</scope>
    <source>
        <strain>LMG 29417 / CECT 9101 / MAFF 303099</strain>
    </source>
</reference>
<feature type="chain" id="PRO_0000179246" description="UDP-N-acetylenolpyruvoylglucosamine reductase">
    <location>
        <begin position="1"/>
        <end position="320"/>
    </location>
</feature>
<feature type="domain" description="FAD-binding PCMH-type" evidence="1">
    <location>
        <begin position="34"/>
        <end position="200"/>
    </location>
</feature>
<feature type="active site" evidence="1">
    <location>
        <position position="180"/>
    </location>
</feature>
<feature type="active site" description="Proton donor" evidence="1">
    <location>
        <position position="229"/>
    </location>
</feature>
<feature type="active site" evidence="1">
    <location>
        <position position="299"/>
    </location>
</feature>
<accession>Q98KB5</accession>
<proteinExistence type="inferred from homology"/>
<protein>
    <recommendedName>
        <fullName evidence="1">UDP-N-acetylenolpyruvoylglucosamine reductase</fullName>
        <ecNumber evidence="1">1.3.1.98</ecNumber>
    </recommendedName>
    <alternativeName>
        <fullName evidence="1">UDP-N-acetylmuramate dehydrogenase</fullName>
    </alternativeName>
</protein>
<name>MURB_RHILO</name>
<sequence length="320" mass="34440">MHGQALIDRLGDRLAGLRGRLTPNAEMDKITWFRAGGLAEVFFQPADEEDLAAFLRAVPEEIPLTIVGVGSNLLVRDGGIPGFVIRLSAKGFGEAEIVSPIRIKAGAATPDKRVAALALEAGIGGFHFYHGIPGAIGGALRMNAGANGVETRERVVEVRALDRKGNVQTMSNAEMGYAYRHSAAPVGLIFTSAVFEGFAEDKATIKAAMDAVQNHRETVQPIREKTGGSTFKNPEGTSAWKEIDKAGCRGLMIGGAQMSPMHCNFMINTGTATGYDLEYLGETVRARVLEHSGIRLQWEIKRIGNFRPGHAVQEFLGQLL</sequence>